<keyword id="KW-1015">Disulfide bond</keyword>
<keyword id="KW-1185">Reference proteome</keyword>
<protein>
    <recommendedName>
        <fullName>Uncharacterized protein ZC168.2</fullName>
    </recommendedName>
</protein>
<feature type="chain" id="PRO_0000209869" description="Uncharacterized protein ZC168.2">
    <location>
        <begin position="1"/>
        <end position="108"/>
    </location>
</feature>
<feature type="disulfide bond" evidence="1">
    <location>
        <begin position="44"/>
        <end position="82"/>
    </location>
</feature>
<feature type="disulfide bond" evidence="1">
    <location>
        <begin position="60"/>
        <end position="78"/>
    </location>
</feature>
<feature type="disulfide bond" evidence="1">
    <location>
        <begin position="63"/>
        <end position="91"/>
    </location>
</feature>
<sequence length="108" mass="12448">MFVGPHRCFLISLIVYTLTVTTSSARLILEDTTVRSEEDSGPSCPVLADEPVGEVMERICDMCHELSSHSRPNMRVECRADCFTTDAFRECLKLFTPRRHTRHLRQKY</sequence>
<name>YH82_CAEEL</name>
<dbReference type="EMBL" id="Z70312">
    <property type="protein sequence ID" value="CAA94383.1"/>
    <property type="molecule type" value="Genomic_DNA"/>
</dbReference>
<dbReference type="PIR" id="T27503">
    <property type="entry name" value="T27503"/>
</dbReference>
<dbReference type="RefSeq" id="NP_501985.1">
    <property type="nucleotide sequence ID" value="NM_069584.3"/>
</dbReference>
<dbReference type="SMR" id="Q23247"/>
<dbReference type="PaxDb" id="6239-ZC168.2"/>
<dbReference type="EnsemblMetazoa" id="ZC168.2.1">
    <property type="protein sequence ID" value="ZC168.2.1"/>
    <property type="gene ID" value="WBGene00013856"/>
</dbReference>
<dbReference type="GeneID" id="191091"/>
<dbReference type="KEGG" id="cel:CELE_ZC168.2"/>
<dbReference type="UCSC" id="ZC168.2">
    <property type="organism name" value="c. elegans"/>
</dbReference>
<dbReference type="AGR" id="WB:WBGene00013856"/>
<dbReference type="CTD" id="191091"/>
<dbReference type="WormBase" id="ZC168.2">
    <property type="protein sequence ID" value="CE06568"/>
    <property type="gene ID" value="WBGene00013856"/>
</dbReference>
<dbReference type="eggNOG" id="ENOG502SYHN">
    <property type="taxonomic scope" value="Eukaryota"/>
</dbReference>
<dbReference type="GeneTree" id="ENSGT00530000069231"/>
<dbReference type="HOGENOM" id="CLU_177225_0_0_1"/>
<dbReference type="InParanoid" id="Q23247"/>
<dbReference type="OMA" id="MERICDM"/>
<dbReference type="OrthoDB" id="6365952at2759"/>
<dbReference type="PRO" id="PR:Q23247"/>
<dbReference type="Proteomes" id="UP000001940">
    <property type="component" value="Chromosome IV"/>
</dbReference>
<dbReference type="Bgee" id="WBGene00013856">
    <property type="expression patterns" value="Expressed in pharyngeal muscle cell (C elegans) and 3 other cell types or tissues"/>
</dbReference>
<dbReference type="GO" id="GO:0005576">
    <property type="term" value="C:extracellular region"/>
    <property type="evidence" value="ECO:0007669"/>
    <property type="project" value="InterPro"/>
</dbReference>
<dbReference type="GO" id="GO:0005184">
    <property type="term" value="F:neuropeptide hormone activity"/>
    <property type="evidence" value="ECO:0007669"/>
    <property type="project" value="InterPro"/>
</dbReference>
<dbReference type="GO" id="GO:0036500">
    <property type="term" value="P:ATF6-mediated unfolded protein response"/>
    <property type="evidence" value="ECO:0007007"/>
    <property type="project" value="WormBase"/>
</dbReference>
<dbReference type="GO" id="GO:0007623">
    <property type="term" value="P:circadian rhythm"/>
    <property type="evidence" value="ECO:0000318"/>
    <property type="project" value="GO_Central"/>
</dbReference>
<dbReference type="GO" id="GO:0036499">
    <property type="term" value="P:PERK-mediated unfolded protein response"/>
    <property type="evidence" value="ECO:0007007"/>
    <property type="project" value="WormBase"/>
</dbReference>
<dbReference type="FunFam" id="1.10.2010.10:FF:000002">
    <property type="entry name" value="Protein CBG14491"/>
    <property type="match status" value="1"/>
</dbReference>
<dbReference type="Gene3D" id="1.10.2010.10">
    <property type="entry name" value="Crustacean CHH/MIH/GIH neurohormone"/>
    <property type="match status" value="1"/>
</dbReference>
<dbReference type="InterPro" id="IPR018251">
    <property type="entry name" value="Crust_neurhormone_CS"/>
</dbReference>
<dbReference type="InterPro" id="IPR031098">
    <property type="entry name" value="Crust_neurohorm"/>
</dbReference>
<dbReference type="InterPro" id="IPR035957">
    <property type="entry name" value="Crust_neurohorm_sf"/>
</dbReference>
<dbReference type="PANTHER" id="PTHR35981">
    <property type="entry name" value="ION TRANSPORT PEPTIDE, ISOFORM C"/>
    <property type="match status" value="1"/>
</dbReference>
<dbReference type="PANTHER" id="PTHR35981:SF10">
    <property type="entry name" value="PROTEIN CBG17645"/>
    <property type="match status" value="1"/>
</dbReference>
<dbReference type="Pfam" id="PF01147">
    <property type="entry name" value="Crust_neurohorm"/>
    <property type="match status" value="1"/>
</dbReference>
<dbReference type="SUPFAM" id="SSF81778">
    <property type="entry name" value="Crustacean CHH/MIH/GIH neurohormone"/>
    <property type="match status" value="1"/>
</dbReference>
<dbReference type="PROSITE" id="PS01250">
    <property type="entry name" value="CHH_MIH_GIH"/>
    <property type="match status" value="1"/>
</dbReference>
<reference key="1">
    <citation type="journal article" date="1998" name="Science">
        <title>Genome sequence of the nematode C. elegans: a platform for investigating biology.</title>
        <authorList>
            <consortium name="The C. elegans sequencing consortium"/>
        </authorList>
    </citation>
    <scope>NUCLEOTIDE SEQUENCE [LARGE SCALE GENOMIC DNA]</scope>
    <source>
        <strain>Bristol N2</strain>
    </source>
</reference>
<proteinExistence type="inferred from homology"/>
<gene>
    <name type="ORF">ZC168.2</name>
</gene>
<evidence type="ECO:0000250" key="1"/>
<evidence type="ECO:0000305" key="2"/>
<organism>
    <name type="scientific">Caenorhabditis elegans</name>
    <dbReference type="NCBI Taxonomy" id="6239"/>
    <lineage>
        <taxon>Eukaryota</taxon>
        <taxon>Metazoa</taxon>
        <taxon>Ecdysozoa</taxon>
        <taxon>Nematoda</taxon>
        <taxon>Chromadorea</taxon>
        <taxon>Rhabditida</taxon>
        <taxon>Rhabditina</taxon>
        <taxon>Rhabditomorpha</taxon>
        <taxon>Rhabditoidea</taxon>
        <taxon>Rhabditidae</taxon>
        <taxon>Peloderinae</taxon>
        <taxon>Caenorhabditis</taxon>
    </lineage>
</organism>
<accession>Q23247</accession>
<comment type="similarity">
    <text evidence="2">Belongs to the arthropod CHH/MIH/GIH/VIH hormone family.</text>
</comment>